<dbReference type="EMBL" id="M76979">
    <property type="protein sequence ID" value="AAA60058.1"/>
    <property type="molecule type" value="mRNA"/>
</dbReference>
<dbReference type="EMBL" id="U29953">
    <property type="protein sequence ID" value="AAA84914.1"/>
    <property type="status" value="ALT_FRAME"/>
    <property type="molecule type" value="Genomic_DNA"/>
</dbReference>
<dbReference type="EMBL" id="AF400442">
    <property type="protein sequence ID" value="AAK92491.1"/>
    <property type="molecule type" value="mRNA"/>
</dbReference>
<dbReference type="EMBL" id="BT007222">
    <property type="protein sequence ID" value="AAP35886.1"/>
    <property type="molecule type" value="mRNA"/>
</dbReference>
<dbReference type="EMBL" id="AY513280">
    <property type="protein sequence ID" value="AAT08033.1"/>
    <property type="molecule type" value="mRNA"/>
</dbReference>
<dbReference type="EMBL" id="AB593011">
    <property type="protein sequence ID" value="BAJ83966.1"/>
    <property type="molecule type" value="mRNA"/>
</dbReference>
<dbReference type="EMBL" id="AB593012">
    <property type="protein sequence ID" value="BAJ83967.1"/>
    <property type="molecule type" value="mRNA"/>
</dbReference>
<dbReference type="EMBL" id="AB593013">
    <property type="protein sequence ID" value="BAJ83968.1"/>
    <property type="molecule type" value="mRNA"/>
</dbReference>
<dbReference type="EMBL" id="AC130343">
    <property type="status" value="NOT_ANNOTATED_CDS"/>
    <property type="molecule type" value="Genomic_DNA"/>
</dbReference>
<dbReference type="EMBL" id="AC130689">
    <property type="status" value="NOT_ANNOTATED_CDS"/>
    <property type="molecule type" value="Genomic_DNA"/>
</dbReference>
<dbReference type="EMBL" id="CH471108">
    <property type="protein sequence ID" value="EAW90577.1"/>
    <property type="molecule type" value="Genomic_DNA"/>
</dbReference>
<dbReference type="EMBL" id="BC000522">
    <property type="protein sequence ID" value="AAH00522.1"/>
    <property type="molecule type" value="mRNA"/>
</dbReference>
<dbReference type="EMBL" id="BC013984">
    <property type="protein sequence ID" value="AAH13984.1"/>
    <property type="molecule type" value="mRNA"/>
</dbReference>
<dbReference type="EMBL" id="AH004879">
    <property type="protein sequence ID" value="AAB38685.1"/>
    <property type="molecule type" value="Genomic_DNA"/>
</dbReference>
<dbReference type="EMBL" id="M90439">
    <property type="protein sequence ID" value="AAA93524.1"/>
    <property type="status" value="ALT_INIT"/>
    <property type="molecule type" value="mRNA"/>
</dbReference>
<dbReference type="CCDS" id="CCDS11012.1"/>
<dbReference type="PIR" id="A46046">
    <property type="entry name" value="A46046"/>
</dbReference>
<dbReference type="PIR" id="A47281">
    <property type="entry name" value="A47281"/>
</dbReference>
<dbReference type="RefSeq" id="NP_001316832.1">
    <property type="nucleotide sequence ID" value="NM_001329903.2"/>
</dbReference>
<dbReference type="RefSeq" id="NP_002606.3">
    <property type="nucleotide sequence ID" value="NM_002615.6"/>
</dbReference>
<dbReference type="PDB" id="1IMV">
    <property type="method" value="X-ray"/>
    <property type="resolution" value="2.85 A"/>
    <property type="chains" value="A=21-418"/>
</dbReference>
<dbReference type="PDBsum" id="1IMV"/>
<dbReference type="SMR" id="P36955"/>
<dbReference type="BioGRID" id="111202">
    <property type="interactions" value="41"/>
</dbReference>
<dbReference type="FunCoup" id="P36955">
    <property type="interactions" value="463"/>
</dbReference>
<dbReference type="IntAct" id="P36955">
    <property type="interactions" value="34"/>
</dbReference>
<dbReference type="MINT" id="P36955"/>
<dbReference type="STRING" id="9606.ENSP00000254722"/>
<dbReference type="ChEMBL" id="CHEMBL4295753"/>
<dbReference type="DrugBank" id="DB09130">
    <property type="generic name" value="Copper"/>
</dbReference>
<dbReference type="MEROPS" id="I04.979"/>
<dbReference type="GlyConnect" id="645">
    <property type="glycosylation" value="7 N-Linked glycans (1 site)"/>
</dbReference>
<dbReference type="GlyCosmos" id="P36955">
    <property type="glycosylation" value="6 sites, 8 glycans"/>
</dbReference>
<dbReference type="GlyGen" id="P36955">
    <property type="glycosylation" value="7 sites, 54 N-linked glycans (1 site), 3 O-linked glycans (6 sites)"/>
</dbReference>
<dbReference type="iPTMnet" id="P36955"/>
<dbReference type="PhosphoSitePlus" id="P36955"/>
<dbReference type="BioMuta" id="SERPINF1"/>
<dbReference type="DMDM" id="313104314"/>
<dbReference type="REPRODUCTION-2DPAGE" id="IPI00006114"/>
<dbReference type="CPTAC" id="non-CPTAC-1146"/>
<dbReference type="jPOST" id="P36955"/>
<dbReference type="MassIVE" id="P36955"/>
<dbReference type="PaxDb" id="9606-ENSP00000254722"/>
<dbReference type="PeptideAtlas" id="P36955"/>
<dbReference type="ProteomicsDB" id="55243"/>
<dbReference type="Pumba" id="P36955"/>
<dbReference type="Antibodypedia" id="865">
    <property type="antibodies" value="663 antibodies from 38 providers"/>
</dbReference>
<dbReference type="DNASU" id="5176"/>
<dbReference type="Ensembl" id="ENST00000254722.9">
    <property type="protein sequence ID" value="ENSP00000254722.4"/>
    <property type="gene ID" value="ENSG00000132386.11"/>
</dbReference>
<dbReference type="GeneID" id="5176"/>
<dbReference type="KEGG" id="hsa:5176"/>
<dbReference type="MANE-Select" id="ENST00000254722.9">
    <property type="protein sequence ID" value="ENSP00000254722.4"/>
    <property type="RefSeq nucleotide sequence ID" value="NM_002615.7"/>
    <property type="RefSeq protein sequence ID" value="NP_002606.3"/>
</dbReference>
<dbReference type="UCSC" id="uc002ftl.4">
    <property type="organism name" value="human"/>
</dbReference>
<dbReference type="AGR" id="HGNC:8824"/>
<dbReference type="CTD" id="5176"/>
<dbReference type="DisGeNET" id="5176"/>
<dbReference type="GeneCards" id="SERPINF1"/>
<dbReference type="HGNC" id="HGNC:8824">
    <property type="gene designation" value="SERPINF1"/>
</dbReference>
<dbReference type="HPA" id="ENSG00000132386">
    <property type="expression patterns" value="Tissue enriched (choroid)"/>
</dbReference>
<dbReference type="MalaCards" id="SERPINF1"/>
<dbReference type="MIM" id="172860">
    <property type="type" value="gene"/>
</dbReference>
<dbReference type="MIM" id="613982">
    <property type="type" value="phenotype"/>
</dbReference>
<dbReference type="neXtProt" id="NX_P36955"/>
<dbReference type="OpenTargets" id="ENSG00000132386"/>
<dbReference type="Orphanet" id="216812">
    <property type="disease" value="Osteogenesis imperfecta type 3"/>
</dbReference>
<dbReference type="Orphanet" id="216820">
    <property type="disease" value="Osteogenesis imperfecta type 4"/>
</dbReference>
<dbReference type="PharmGKB" id="PA35508"/>
<dbReference type="VEuPathDB" id="HostDB:ENSG00000132386"/>
<dbReference type="eggNOG" id="KOG2392">
    <property type="taxonomic scope" value="Eukaryota"/>
</dbReference>
<dbReference type="GeneTree" id="ENSGT00940000158112"/>
<dbReference type="HOGENOM" id="CLU_023330_3_1_1"/>
<dbReference type="InParanoid" id="P36955"/>
<dbReference type="OMA" id="QEVNNWV"/>
<dbReference type="OrthoDB" id="9995163at2759"/>
<dbReference type="PAN-GO" id="P36955">
    <property type="GO annotations" value="4 GO annotations based on evolutionary models"/>
</dbReference>
<dbReference type="PhylomeDB" id="P36955"/>
<dbReference type="TreeFam" id="TF317350"/>
<dbReference type="PathwayCommons" id="P36955"/>
<dbReference type="SignaLink" id="P36955"/>
<dbReference type="SIGNOR" id="P36955"/>
<dbReference type="BioGRID-ORCS" id="5176">
    <property type="hits" value="10 hits in 1157 CRISPR screens"/>
</dbReference>
<dbReference type="ChiTaRS" id="SERPINF1">
    <property type="organism name" value="human"/>
</dbReference>
<dbReference type="EvolutionaryTrace" id="P36955"/>
<dbReference type="GeneWiki" id="PEDF"/>
<dbReference type="GenomeRNAi" id="5176"/>
<dbReference type="Pharos" id="P36955">
    <property type="development level" value="Tbio"/>
</dbReference>
<dbReference type="PRO" id="PR:P36955"/>
<dbReference type="Proteomes" id="UP000005640">
    <property type="component" value="Chromosome 17"/>
</dbReference>
<dbReference type="RNAct" id="P36955">
    <property type="molecule type" value="protein"/>
</dbReference>
<dbReference type="Bgee" id="ENSG00000132386">
    <property type="expression patterns" value="Expressed in pigmented layer of retina and 201 other cell types or tissues"/>
</dbReference>
<dbReference type="ExpressionAtlas" id="P36955">
    <property type="expression patterns" value="baseline and differential"/>
</dbReference>
<dbReference type="GO" id="GO:0043203">
    <property type="term" value="C:axon hillock"/>
    <property type="evidence" value="ECO:0007669"/>
    <property type="project" value="Ensembl"/>
</dbReference>
<dbReference type="GO" id="GO:0005604">
    <property type="term" value="C:basement membrane"/>
    <property type="evidence" value="ECO:0007669"/>
    <property type="project" value="Ensembl"/>
</dbReference>
<dbReference type="GO" id="GO:0062023">
    <property type="term" value="C:collagen-containing extracellular matrix"/>
    <property type="evidence" value="ECO:0007005"/>
    <property type="project" value="BHF-UCL"/>
</dbReference>
<dbReference type="GO" id="GO:0070062">
    <property type="term" value="C:extracellular exosome"/>
    <property type="evidence" value="ECO:0007005"/>
    <property type="project" value="UniProtKB"/>
</dbReference>
<dbReference type="GO" id="GO:0005576">
    <property type="term" value="C:extracellular region"/>
    <property type="evidence" value="ECO:0000314"/>
    <property type="project" value="UniProtKB"/>
</dbReference>
<dbReference type="GO" id="GO:0005615">
    <property type="term" value="C:extracellular space"/>
    <property type="evidence" value="ECO:0007005"/>
    <property type="project" value="BHF-UCL"/>
</dbReference>
<dbReference type="GO" id="GO:0042470">
    <property type="term" value="C:melanosome"/>
    <property type="evidence" value="ECO:0007669"/>
    <property type="project" value="UniProtKB-SubCell"/>
</dbReference>
<dbReference type="GO" id="GO:0048471">
    <property type="term" value="C:perinuclear region of cytoplasm"/>
    <property type="evidence" value="ECO:0007669"/>
    <property type="project" value="Ensembl"/>
</dbReference>
<dbReference type="GO" id="GO:0004867">
    <property type="term" value="F:serine-type endopeptidase inhibitor activity"/>
    <property type="evidence" value="ECO:0000318"/>
    <property type="project" value="GO_Central"/>
</dbReference>
<dbReference type="GO" id="GO:0071279">
    <property type="term" value="P:cellular response to cobalt ion"/>
    <property type="evidence" value="ECO:0007669"/>
    <property type="project" value="Ensembl"/>
</dbReference>
<dbReference type="GO" id="GO:0071549">
    <property type="term" value="P:cellular response to dexamethasone stimulus"/>
    <property type="evidence" value="ECO:0007669"/>
    <property type="project" value="Ensembl"/>
</dbReference>
<dbReference type="GO" id="GO:0071333">
    <property type="term" value="P:cellular response to glucose stimulus"/>
    <property type="evidence" value="ECO:0007669"/>
    <property type="project" value="Ensembl"/>
</dbReference>
<dbReference type="GO" id="GO:0071300">
    <property type="term" value="P:cellular response to retinoic acid"/>
    <property type="evidence" value="ECO:0007669"/>
    <property type="project" value="Ensembl"/>
</dbReference>
<dbReference type="GO" id="GO:0060767">
    <property type="term" value="P:epithelial cell proliferation involved in prostate gland development"/>
    <property type="evidence" value="ECO:0007669"/>
    <property type="project" value="Ensembl"/>
</dbReference>
<dbReference type="GO" id="GO:0001822">
    <property type="term" value="P:kidney development"/>
    <property type="evidence" value="ECO:0007669"/>
    <property type="project" value="Ensembl"/>
</dbReference>
<dbReference type="GO" id="GO:0016525">
    <property type="term" value="P:negative regulation of angiogenesis"/>
    <property type="evidence" value="ECO:0000314"/>
    <property type="project" value="UniProtKB"/>
</dbReference>
<dbReference type="GO" id="GO:0010596">
    <property type="term" value="P:negative regulation of endothelial cell migration"/>
    <property type="evidence" value="ECO:0007669"/>
    <property type="project" value="Ensembl"/>
</dbReference>
<dbReference type="GO" id="GO:0060770">
    <property type="term" value="P:negative regulation of epithelial cell proliferation involved in prostate gland development"/>
    <property type="evidence" value="ECO:0007669"/>
    <property type="project" value="Ensembl"/>
</dbReference>
<dbReference type="GO" id="GO:0010629">
    <property type="term" value="P:negative regulation of gene expression"/>
    <property type="evidence" value="ECO:0007669"/>
    <property type="project" value="Ensembl"/>
</dbReference>
<dbReference type="GO" id="GO:0042698">
    <property type="term" value="P:ovulation cycle"/>
    <property type="evidence" value="ECO:0007669"/>
    <property type="project" value="Ensembl"/>
</dbReference>
<dbReference type="GO" id="GO:0050769">
    <property type="term" value="P:positive regulation of neurogenesis"/>
    <property type="evidence" value="ECO:0000314"/>
    <property type="project" value="UniProtKB"/>
</dbReference>
<dbReference type="GO" id="GO:0010976">
    <property type="term" value="P:positive regulation of neuron projection development"/>
    <property type="evidence" value="ECO:0007669"/>
    <property type="project" value="Ensembl"/>
</dbReference>
<dbReference type="GO" id="GO:0010447">
    <property type="term" value="P:response to acidic pH"/>
    <property type="evidence" value="ECO:0007669"/>
    <property type="project" value="Ensembl"/>
</dbReference>
<dbReference type="GO" id="GO:0046685">
    <property type="term" value="P:response to arsenic-containing substance"/>
    <property type="evidence" value="ECO:0007669"/>
    <property type="project" value="Ensembl"/>
</dbReference>
<dbReference type="GO" id="GO:1901652">
    <property type="term" value="P:response to peptide"/>
    <property type="evidence" value="ECO:0007669"/>
    <property type="project" value="Ensembl"/>
</dbReference>
<dbReference type="GO" id="GO:0060041">
    <property type="term" value="P:retina development in camera-type eye"/>
    <property type="evidence" value="ECO:0007669"/>
    <property type="project" value="Ensembl"/>
</dbReference>
<dbReference type="GO" id="GO:0007614">
    <property type="term" value="P:short-term memory"/>
    <property type="evidence" value="ECO:0007669"/>
    <property type="project" value="Ensembl"/>
</dbReference>
<dbReference type="CDD" id="cd02052">
    <property type="entry name" value="serpinF1_PEDF"/>
    <property type="match status" value="1"/>
</dbReference>
<dbReference type="FunFam" id="3.30.497.10:FF:000003">
    <property type="entry name" value="Serpin family F member 1"/>
    <property type="match status" value="1"/>
</dbReference>
<dbReference type="Gene3D" id="2.30.39.10">
    <property type="entry name" value="Alpha-1-antitrypsin, domain 1"/>
    <property type="match status" value="1"/>
</dbReference>
<dbReference type="Gene3D" id="3.30.497.10">
    <property type="entry name" value="Antithrombin, subunit I, domain 2"/>
    <property type="match status" value="1"/>
</dbReference>
<dbReference type="InterPro" id="IPR033832">
    <property type="entry name" value="PEDF_serpin_dom"/>
</dbReference>
<dbReference type="InterPro" id="IPR023795">
    <property type="entry name" value="Serpin_CS"/>
</dbReference>
<dbReference type="InterPro" id="IPR023796">
    <property type="entry name" value="Serpin_dom"/>
</dbReference>
<dbReference type="InterPro" id="IPR000215">
    <property type="entry name" value="Serpin_fam"/>
</dbReference>
<dbReference type="InterPro" id="IPR036186">
    <property type="entry name" value="Serpin_sf"/>
</dbReference>
<dbReference type="InterPro" id="IPR042178">
    <property type="entry name" value="Serpin_sf_1"/>
</dbReference>
<dbReference type="InterPro" id="IPR042185">
    <property type="entry name" value="Serpin_sf_2"/>
</dbReference>
<dbReference type="PANTHER" id="PTHR11461:SF84">
    <property type="entry name" value="PIGMENT EPITHELIUM-DERIVED FACTOR"/>
    <property type="match status" value="1"/>
</dbReference>
<dbReference type="PANTHER" id="PTHR11461">
    <property type="entry name" value="SERINE PROTEASE INHIBITOR, SERPIN"/>
    <property type="match status" value="1"/>
</dbReference>
<dbReference type="Pfam" id="PF00079">
    <property type="entry name" value="Serpin"/>
    <property type="match status" value="1"/>
</dbReference>
<dbReference type="SMART" id="SM00093">
    <property type="entry name" value="SERPIN"/>
    <property type="match status" value="1"/>
</dbReference>
<dbReference type="SUPFAM" id="SSF56574">
    <property type="entry name" value="Serpins"/>
    <property type="match status" value="1"/>
</dbReference>
<dbReference type="PROSITE" id="PS00284">
    <property type="entry name" value="SERPIN"/>
    <property type="match status" value="1"/>
</dbReference>
<proteinExistence type="evidence at protein level"/>
<feature type="signal peptide">
    <location>
        <begin position="1"/>
        <end position="19"/>
    </location>
</feature>
<feature type="chain" id="PRO_0000032508" description="Pigment epithelium-derived factor">
    <location>
        <begin position="20"/>
        <end position="418"/>
    </location>
</feature>
<feature type="region of interest" description="Disordered" evidence="1">
    <location>
        <begin position="20"/>
        <end position="39"/>
    </location>
</feature>
<feature type="region of interest" description="O-glycosylated at one site">
    <location>
        <begin position="371"/>
        <end position="383"/>
    </location>
</feature>
<feature type="modified residue" description="Pyrrolidone carboxylic acid" evidence="4">
    <location>
        <position position="20"/>
    </location>
</feature>
<feature type="modified residue" description="Phosphoserine; by CK2" evidence="5">
    <location>
        <position position="24"/>
    </location>
</feature>
<feature type="modified residue" description="Phosphoserine; by CK2" evidence="5">
    <location>
        <position position="114"/>
    </location>
</feature>
<feature type="modified residue" description="Phosphoserine; by PKA" evidence="5">
    <location>
        <position position="227"/>
    </location>
</feature>
<feature type="glycosylation site" description="N-linked (GlcNAc...) (complex) asparagine" evidence="3 7 10 11">
    <location>
        <position position="285"/>
    </location>
</feature>
<feature type="sequence variant" id="VAR_009126" description="Confirmed at protein level; dbSNP:rs1136287." evidence="2 6 14 17 18 19 20 21 22 23">
    <original>T</original>
    <variation>M</variation>
    <location>
        <position position="72"/>
    </location>
</feature>
<feature type="sequence variant" id="VAR_025500" description="In dbSNP:rs1804145." evidence="6">
    <original>P</original>
    <variation>R</variation>
    <location>
        <position position="132"/>
    </location>
</feature>
<feature type="sequence conflict" description="In Ref. 1; AAA60058 and 10; AAB38685." evidence="24" ref="1 10">
    <original>EQ</original>
    <variation>DE</variation>
    <location>
        <begin position="97"/>
        <end position="98"/>
    </location>
</feature>
<feature type="helix" evidence="25">
    <location>
        <begin position="45"/>
        <end position="48"/>
    </location>
</feature>
<feature type="helix" evidence="25">
    <location>
        <begin position="50"/>
        <end position="72"/>
    </location>
</feature>
<feature type="strand" evidence="25">
    <location>
        <begin position="78"/>
        <end position="80"/>
    </location>
</feature>
<feature type="helix" evidence="25">
    <location>
        <begin position="82"/>
        <end position="92"/>
    </location>
</feature>
<feature type="helix" evidence="25">
    <location>
        <begin position="93"/>
        <end position="95"/>
    </location>
</feature>
<feature type="helix" evidence="25">
    <location>
        <begin position="98"/>
        <end position="107"/>
    </location>
</feature>
<feature type="helix" evidence="25">
    <location>
        <begin position="110"/>
        <end position="112"/>
    </location>
</feature>
<feature type="helix" evidence="25">
    <location>
        <begin position="118"/>
        <end position="129"/>
    </location>
</feature>
<feature type="strand" evidence="25">
    <location>
        <begin position="136"/>
        <end position="144"/>
    </location>
</feature>
<feature type="helix" evidence="25">
    <location>
        <begin position="152"/>
        <end position="162"/>
    </location>
</feature>
<feature type="helix" evidence="25">
    <location>
        <begin position="173"/>
        <end position="187"/>
    </location>
</feature>
<feature type="turn" evidence="25">
    <location>
        <begin position="188"/>
        <end position="190"/>
    </location>
</feature>
<feature type="strand" evidence="25">
    <location>
        <begin position="204"/>
        <end position="214"/>
    </location>
</feature>
<feature type="strand" evidence="25">
    <location>
        <begin position="217"/>
        <end position="219"/>
    </location>
</feature>
<feature type="helix" evidence="25">
    <location>
        <begin position="223"/>
        <end position="225"/>
    </location>
</feature>
<feature type="strand" evidence="25">
    <location>
        <begin position="227"/>
        <end position="236"/>
    </location>
</feature>
<feature type="strand" evidence="25">
    <location>
        <begin position="238"/>
        <end position="256"/>
    </location>
</feature>
<feature type="turn" evidence="25">
    <location>
        <begin position="257"/>
        <end position="260"/>
    </location>
</feature>
<feature type="strand" evidence="25">
    <location>
        <begin position="261"/>
        <end position="268"/>
    </location>
</feature>
<feature type="turn" evidence="25">
    <location>
        <begin position="269"/>
        <end position="271"/>
    </location>
</feature>
<feature type="strand" evidence="25">
    <location>
        <begin position="272"/>
        <end position="281"/>
    </location>
</feature>
<feature type="helix" evidence="25">
    <location>
        <begin position="287"/>
        <end position="290"/>
    </location>
</feature>
<feature type="helix" evidence="25">
    <location>
        <begin position="295"/>
        <end position="304"/>
    </location>
</feature>
<feature type="strand" evidence="25">
    <location>
        <begin position="306"/>
        <end position="315"/>
    </location>
</feature>
<feature type="strand" evidence="25">
    <location>
        <begin position="317"/>
        <end position="324"/>
    </location>
</feature>
<feature type="helix" evidence="25">
    <location>
        <begin position="326"/>
        <end position="330"/>
    </location>
</feature>
<feature type="turn" evidence="25">
    <location>
        <begin position="331"/>
        <end position="335"/>
    </location>
</feature>
<feature type="helix" evidence="25">
    <location>
        <begin position="336"/>
        <end position="339"/>
    </location>
</feature>
<feature type="turn" evidence="25">
    <location>
        <begin position="344"/>
        <end position="346"/>
    </location>
</feature>
<feature type="strand" evidence="25">
    <location>
        <begin position="353"/>
        <end position="364"/>
    </location>
</feature>
<feature type="strand" evidence="25">
    <location>
        <begin position="368"/>
        <end position="370"/>
    </location>
</feature>
<feature type="strand" evidence="25">
    <location>
        <begin position="387"/>
        <end position="389"/>
    </location>
</feature>
<feature type="strand" evidence="25">
    <location>
        <begin position="394"/>
        <end position="400"/>
    </location>
</feature>
<feature type="turn" evidence="25">
    <location>
        <begin position="401"/>
        <end position="403"/>
    </location>
</feature>
<feature type="strand" evidence="25">
    <location>
        <begin position="406"/>
        <end position="413"/>
    </location>
</feature>
<comment type="function">
    <text evidence="15 16">Neurotrophic protein; induces extensive neuronal differentiation in retinoblastoma cells. Potent inhibitor of angiogenesis. As it does not undergo the S (stressed) to R (relaxed) conformational transition characteristic of active serpins, it exhibits no serine protease inhibitory activity.</text>
</comment>
<comment type="subunit">
    <text evidence="8">Interacts with PNPLA2; this interaction stimulates the phospholipase A2 activity of PNPLA2.</text>
</comment>
<comment type="interaction">
    <interactant intactId="EBI-2932733">
        <id>P36955</id>
    </interactant>
    <interactant intactId="EBI-6255981">
        <id>Q7L775</id>
        <label>EPM2AIP1</label>
    </interactant>
    <organismsDiffer>false</organismsDiffer>
    <experiments>11</experiments>
</comment>
<comment type="interaction">
    <interactant intactId="EBI-2932733">
        <id>P36955</id>
    </interactant>
    <interactant intactId="EBI-354921">
        <id>P11021</id>
        <label>HSPA5</label>
    </interactant>
    <organismsDiffer>false</organismsDiffer>
    <experiments>3</experiments>
</comment>
<comment type="interaction">
    <interactant intactId="EBI-2932733">
        <id>P36955</id>
    </interactant>
    <interactant intactId="EBI-2857352">
        <id>Q9P2X3</id>
        <label>IMPACT</label>
    </interactant>
    <organismsDiffer>false</organismsDiffer>
    <experiments>3</experiments>
</comment>
<comment type="interaction">
    <interactant intactId="EBI-2932733">
        <id>P36955</id>
    </interactant>
    <interactant intactId="EBI-739909">
        <id>Q969R5</id>
        <label>L3MBTL2</label>
    </interactant>
    <organismsDiffer>false</organismsDiffer>
    <experiments>2</experiments>
</comment>
<comment type="interaction">
    <interactant intactId="EBI-2932733">
        <id>P36955</id>
    </interactant>
    <interactant intactId="EBI-744081">
        <id>Q96EQ0</id>
        <label>SGTB</label>
    </interactant>
    <organismsDiffer>false</organismsDiffer>
    <experiments>3</experiments>
</comment>
<comment type="subcellular location">
    <subcellularLocation>
        <location evidence="9">Secreted</location>
    </subcellularLocation>
    <subcellularLocation>
        <location evidence="9">Melanosome</location>
    </subcellularLocation>
    <text>Enriched in stage I melanosomes.</text>
</comment>
<comment type="tissue specificity">
    <text evidence="4">Retinal pigment epithelial cells and blood plasma.</text>
</comment>
<comment type="developmental stage">
    <text>Expressed in quiescent cells.</text>
</comment>
<comment type="domain">
    <text>The N-terminal (AA 44-121) exhibits neurite outgrowth-inducing activity. The C-terminal exposed loop (AA 382-418) is essential for serpin activity.</text>
</comment>
<comment type="PTM">
    <text evidence="5">The N-terminus is blocked. Extracellular phosphorylation enhances antiangiogenic activity.</text>
</comment>
<comment type="PTM">
    <text evidence="3 7 10 11 12">N- and O-glycosylated. O-glycosylated with a core 1 or possibly core 8 glycan.</text>
</comment>
<comment type="disease" evidence="13">
    <disease id="DI-02725">
        <name>Osteogenesis imperfecta 6</name>
        <acronym>OI6</acronym>
        <description>A form of osteogenesis imperfecta, a disorder of bone formation characterized by low bone mass, bone fragility and susceptibility to fractures after minimal trauma. Disease severity ranges from very mild forms without fractures to intrauterine fractures and perinatal lethality. Extraskeletal manifestations, which affect a variable number of patients, are dentinogenesis imperfecta, hearing loss, and blue sclerae. OI6 is a severe, autosomal recessive form compatible with OI type III in the Sillence classification.</description>
        <dbReference type="MIM" id="613982"/>
    </disease>
    <text>The disease is caused by variants affecting the gene represented in this entry.</text>
</comment>
<comment type="similarity">
    <text evidence="24">Belongs to the serpin family.</text>
</comment>
<comment type="sequence caution" evidence="24">
    <conflict type="frameshift">
        <sequence resource="EMBL-CDS" id="AAA84914"/>
    </conflict>
</comment>
<comment type="sequence caution" evidence="24">
    <conflict type="erroneous initiation">
        <sequence resource="EMBL-CDS" id="AAA93524"/>
    </conflict>
    <text>Extended N-terminus.</text>
</comment>
<protein>
    <recommendedName>
        <fullName>Pigment epithelium-derived factor</fullName>
        <shortName>PEDF</shortName>
    </recommendedName>
    <alternativeName>
        <fullName>Cell proliferation-inducing gene 35 protein</fullName>
    </alternativeName>
    <alternativeName>
        <fullName>EPC-1</fullName>
    </alternativeName>
    <alternativeName>
        <fullName>Serpin F1</fullName>
    </alternativeName>
</protein>
<reference key="1">
    <citation type="journal article" date="1993" name="Proc. Natl. Acad. Sci. U.S.A.">
        <title>Pigment epithelium-derived factor: neurotrophic activity and identification as a member of the serine protease inhibitor gene family.</title>
        <authorList>
            <person name="Steele F.R."/>
            <person name="Chader G.J."/>
            <person name="Johnson L.V."/>
            <person name="Tombran-Tink J."/>
        </authorList>
    </citation>
    <scope>NUCLEOTIDE SEQUENCE [MRNA]</scope>
    <scope>PARTIAL PROTEIN SEQUENCE</scope>
    <scope>VARIANT MET-72</scope>
    <source>
        <tissue>Fetal eye</tissue>
    </source>
</reference>
<reference key="2">
    <citation type="journal article" date="1996" name="Mol. Vis.">
        <title>Organization, evolutionary conservation, expression and unusual Alu density of the human gene for pigment epithelium-derived factor, a unique neurotrophic serpin.</title>
        <authorList>
            <person name="Tombran-Tink J."/>
            <person name="Mazuruk K."/>
            <person name="Rodriguez I.R."/>
            <person name="Chung D."/>
            <person name="Linker T."/>
            <person name="Englander E."/>
            <person name="Chader G.J."/>
        </authorList>
    </citation>
    <scope>NUCLEOTIDE SEQUENCE [GENOMIC DNA]</scope>
    <scope>VARIANT MET-72</scope>
</reference>
<reference key="3">
    <citation type="submission" date="2001-07" db="EMBL/GenBank/DDBJ databases">
        <authorList>
            <person name="Yin B."/>
            <person name="Peng X."/>
            <person name="Yuan J."/>
            <person name="Qiang B."/>
        </authorList>
    </citation>
    <scope>NUCLEOTIDE SEQUENCE [MRNA]</scope>
    <scope>VARIANT MET-72</scope>
</reference>
<reference key="4">
    <citation type="submission" date="2003-05" db="EMBL/GenBank/DDBJ databases">
        <title>Cloning of human full-length CDSs in BD Creator(TM) system donor vector.</title>
        <authorList>
            <person name="Kalnine N."/>
            <person name="Chen X."/>
            <person name="Rolfs A."/>
            <person name="Halleck A."/>
            <person name="Hines L."/>
            <person name="Eisenstein S."/>
            <person name="Koundinya M."/>
            <person name="Raphael J."/>
            <person name="Moreira D."/>
            <person name="Kelley T."/>
            <person name="LaBaer J."/>
            <person name="Lin Y."/>
            <person name="Phelan M."/>
            <person name="Farmer A."/>
        </authorList>
    </citation>
    <scope>NUCLEOTIDE SEQUENCE [LARGE SCALE MRNA]</scope>
</reference>
<reference key="5">
    <citation type="submission" date="2003-12" db="EMBL/GenBank/DDBJ databases">
        <title>Identification of a human cell proliferation inducing gene.</title>
        <authorList>
            <person name="Kim J.W."/>
        </authorList>
    </citation>
    <scope>NUCLEOTIDE SEQUENCE [LARGE SCALE MRNA]</scope>
    <scope>VARIANT MET-72</scope>
    <source>
        <tissue>Liver cancer</tissue>
    </source>
</reference>
<reference key="6">
    <citation type="journal article" date="2011" name="Invest. Ophthalmol. Vis. Sci.">
        <title>Full-length transcriptome analysis of human retina-derived cell lines ARPE-19 and Y79 using the vector-capping method.</title>
        <authorList>
            <person name="Oshikawa M."/>
            <person name="Tsutsui C."/>
            <person name="Ikegami T."/>
            <person name="Fuchida Y."/>
            <person name="Matsubara M."/>
            <person name="Toyama S."/>
            <person name="Usami R."/>
            <person name="Ohtoko K."/>
            <person name="Kato S."/>
        </authorList>
    </citation>
    <scope>NUCLEOTIDE SEQUENCE [LARGE SCALE MRNA]</scope>
</reference>
<reference key="7">
    <citation type="journal article" date="2006" name="Nature">
        <title>DNA sequence of human chromosome 17 and analysis of rearrangement in the human lineage.</title>
        <authorList>
            <person name="Zody M.C."/>
            <person name="Garber M."/>
            <person name="Adams D.J."/>
            <person name="Sharpe T."/>
            <person name="Harrow J."/>
            <person name="Lupski J.R."/>
            <person name="Nicholson C."/>
            <person name="Searle S.M."/>
            <person name="Wilming L."/>
            <person name="Young S.K."/>
            <person name="Abouelleil A."/>
            <person name="Allen N.R."/>
            <person name="Bi W."/>
            <person name="Bloom T."/>
            <person name="Borowsky M.L."/>
            <person name="Bugalter B.E."/>
            <person name="Butler J."/>
            <person name="Chang J.L."/>
            <person name="Chen C.-K."/>
            <person name="Cook A."/>
            <person name="Corum B."/>
            <person name="Cuomo C.A."/>
            <person name="de Jong P.J."/>
            <person name="DeCaprio D."/>
            <person name="Dewar K."/>
            <person name="FitzGerald M."/>
            <person name="Gilbert J."/>
            <person name="Gibson R."/>
            <person name="Gnerre S."/>
            <person name="Goldstein S."/>
            <person name="Grafham D.V."/>
            <person name="Grocock R."/>
            <person name="Hafez N."/>
            <person name="Hagopian D.S."/>
            <person name="Hart E."/>
            <person name="Norman C.H."/>
            <person name="Humphray S."/>
            <person name="Jaffe D.B."/>
            <person name="Jones M."/>
            <person name="Kamal M."/>
            <person name="Khodiyar V.K."/>
            <person name="LaButti K."/>
            <person name="Laird G."/>
            <person name="Lehoczky J."/>
            <person name="Liu X."/>
            <person name="Lokyitsang T."/>
            <person name="Loveland J."/>
            <person name="Lui A."/>
            <person name="Macdonald P."/>
            <person name="Major J.E."/>
            <person name="Matthews L."/>
            <person name="Mauceli E."/>
            <person name="McCarroll S.A."/>
            <person name="Mihalev A.H."/>
            <person name="Mudge J."/>
            <person name="Nguyen C."/>
            <person name="Nicol R."/>
            <person name="O'Leary S.B."/>
            <person name="Osoegawa K."/>
            <person name="Schwartz D.C."/>
            <person name="Shaw-Smith C."/>
            <person name="Stankiewicz P."/>
            <person name="Steward C."/>
            <person name="Swarbreck D."/>
            <person name="Venkataraman V."/>
            <person name="Whittaker C.A."/>
            <person name="Yang X."/>
            <person name="Zimmer A.R."/>
            <person name="Bradley A."/>
            <person name="Hubbard T."/>
            <person name="Birren B.W."/>
            <person name="Rogers J."/>
            <person name="Lander E.S."/>
            <person name="Nusbaum C."/>
        </authorList>
    </citation>
    <scope>NUCLEOTIDE SEQUENCE [LARGE SCALE GENOMIC DNA]</scope>
</reference>
<reference key="8">
    <citation type="submission" date="2005-09" db="EMBL/GenBank/DDBJ databases">
        <authorList>
            <person name="Mural R.J."/>
            <person name="Istrail S."/>
            <person name="Sutton G.G."/>
            <person name="Florea L."/>
            <person name="Halpern A.L."/>
            <person name="Mobarry C.M."/>
            <person name="Lippert R."/>
            <person name="Walenz B."/>
            <person name="Shatkay H."/>
            <person name="Dew I."/>
            <person name="Miller J.R."/>
            <person name="Flanigan M.J."/>
            <person name="Edwards N.J."/>
            <person name="Bolanos R."/>
            <person name="Fasulo D."/>
            <person name="Halldorsson B.V."/>
            <person name="Hannenhalli S."/>
            <person name="Turner R."/>
            <person name="Yooseph S."/>
            <person name="Lu F."/>
            <person name="Nusskern D.R."/>
            <person name="Shue B.C."/>
            <person name="Zheng X.H."/>
            <person name="Zhong F."/>
            <person name="Delcher A.L."/>
            <person name="Huson D.H."/>
            <person name="Kravitz S.A."/>
            <person name="Mouchard L."/>
            <person name="Reinert K."/>
            <person name="Remington K.A."/>
            <person name="Clark A.G."/>
            <person name="Waterman M.S."/>
            <person name="Eichler E.E."/>
            <person name="Adams M.D."/>
            <person name="Hunkapiller M.W."/>
            <person name="Myers E.W."/>
            <person name="Venter J.C."/>
        </authorList>
    </citation>
    <scope>NUCLEOTIDE SEQUENCE [LARGE SCALE GENOMIC DNA]</scope>
    <scope>VARIANT MET-72</scope>
</reference>
<reference key="9">
    <citation type="journal article" date="2004" name="Genome Res.">
        <title>The status, quality, and expansion of the NIH full-length cDNA project: the Mammalian Gene Collection (MGC).</title>
        <authorList>
            <consortium name="The MGC Project Team"/>
        </authorList>
    </citation>
    <scope>NUCLEOTIDE SEQUENCE [LARGE SCALE MRNA]</scope>
    <scope>VARIANTS MET-72 AND ARG-132</scope>
    <source>
        <tissue>Muscle</tissue>
    </source>
</reference>
<reference key="10">
    <citation type="thesis" date="1996" institute="Medical College of Pennsylvania" country="United States">
        <authorList>
            <person name="Coljee V.W."/>
        </authorList>
    </citation>
    <scope>NUCLEOTIDE SEQUENCE [GENOMIC DNA] OF 1-332</scope>
    <scope>VARIANT MET-72</scope>
    <source>
        <tissue>Fetal lung fibroblast</tissue>
    </source>
</reference>
<reference key="11">
    <citation type="journal article" date="2003" name="Biochem. J.">
        <title>Pigment-epithelium-derived factor (PEDF) occurs at a physiologically relevant concentration in human blood: purification and characterization.</title>
        <authorList>
            <person name="Petersen S.V."/>
            <person name="Valnickova Z."/>
            <person name="Enghild J.J."/>
        </authorList>
    </citation>
    <scope>PROTEIN SEQUENCE OF 21-29; 253-262 AND 282-303</scope>
    <scope>TISSUE SPECIFICITY</scope>
    <scope>PYROGLUTAMATE FORMATION AT GLN-20</scope>
    <source>
        <tissue>Plasma</tissue>
    </source>
</reference>
<reference key="12">
    <citation type="journal article" date="1993" name="J. Biol. Chem.">
        <title>Senescent WI-38 cells fail to express EPC-1, a gene induced in young cells upon entry into the G0 state.</title>
        <authorList>
            <person name="Pignolo R.J."/>
            <person name="Cristofalo V.J."/>
            <person name="Rotenberg M.O."/>
        </authorList>
    </citation>
    <scope>NUCLEOTIDE SEQUENCE [MRNA] OF 60-418</scope>
    <scope>VARIANT MET-72</scope>
    <source>
        <tissue>Fetal lung fibroblast</tissue>
    </source>
</reference>
<reference key="13">
    <citation type="journal article" date="1993" name="J. Biol. Chem.">
        <title>Overexpression of fetal human pigment epithelium-derived factor in Escherichia coli. A functionally active neurotrophic factor.</title>
        <authorList>
            <person name="Becerra S.P."/>
            <person name="Palmer I."/>
            <person name="Kumar A."/>
            <person name="Steele F.R."/>
            <person name="Shiloach J."/>
            <person name="Notario V."/>
            <person name="Chader G.J."/>
        </authorList>
    </citation>
    <scope>FUNCTION</scope>
</reference>
<reference key="14">
    <citation type="journal article" date="1995" name="J. Biol. Chem.">
        <title>Pigment epithelium-derived factor behaves like a noninhibitory serpin. Neurotrophic activity does not require the serpin reactive loop.</title>
        <authorList>
            <person name="Becerra S.P."/>
            <person name="Sagasti A."/>
            <person name="Spinella P."/>
            <person name="Notario V."/>
        </authorList>
    </citation>
    <scope>FUNCTION</scope>
</reference>
<reference key="15">
    <citation type="journal article" date="2005" name="Blood">
        <title>Extracellular phosphorylation converts pigment epithelium-derived factor from a neurotrophic to an antiangiogenic factor.</title>
        <authorList>
            <person name="Maik-Rachline G."/>
            <person name="Shaltiel S."/>
            <person name="Seger R."/>
        </authorList>
    </citation>
    <scope>PHOSPHORYLATION AT SER-24; SER-114 AND SER-227</scope>
</reference>
<reference key="16">
    <citation type="journal article" date="2005" name="J. Proteome Res.">
        <title>Human plasma N-glycoproteome analysis by immunoaffinity subtraction, hydrazide chemistry, and mass spectrometry.</title>
        <authorList>
            <person name="Liu T."/>
            <person name="Qian W.-J."/>
            <person name="Gritsenko M.A."/>
            <person name="Camp D.G. II"/>
            <person name="Monroe M.E."/>
            <person name="Moore R.J."/>
            <person name="Smith R.D."/>
        </authorList>
    </citation>
    <scope>GLYCOSYLATION [LARGE SCALE ANALYSIS] AT ASN-285</scope>
    <source>
        <tissue>Plasma</tissue>
    </source>
</reference>
<reference key="17">
    <citation type="journal article" date="2006" name="J. Biol. Chem.">
        <title>Identification of a lipase-linked cell membrane receptor for pigment epithelium-derived factor.</title>
        <authorList>
            <person name="Notari L."/>
            <person name="Baladron V."/>
            <person name="Aroca-Aguilar J.D."/>
            <person name="Balko N."/>
            <person name="Heredia R."/>
            <person name="Meyer C."/>
            <person name="Notario P.M."/>
            <person name="Saravanamuthu S."/>
            <person name="Nueda M.-L."/>
            <person name="Sanchez-Sanchez F."/>
            <person name="Escribano J."/>
            <person name="Laborda J."/>
            <person name="Becerra S.P."/>
        </authorList>
    </citation>
    <scope>INTERACTION WITH PNPLA2</scope>
</reference>
<reference key="18">
    <citation type="journal article" date="2006" name="J. Proteome Res.">
        <title>Proteomic and bioinformatic characterization of the biogenesis and function of melanosomes.</title>
        <authorList>
            <person name="Chi A."/>
            <person name="Valencia J.C."/>
            <person name="Hu Z.-Z."/>
            <person name="Watabe H."/>
            <person name="Yamaguchi H."/>
            <person name="Mangini N.J."/>
            <person name="Huang H."/>
            <person name="Canfield V.A."/>
            <person name="Cheng K.C."/>
            <person name="Yang F."/>
            <person name="Abe R."/>
            <person name="Yamagishi S."/>
            <person name="Shabanowitz J."/>
            <person name="Hearing V.J."/>
            <person name="Wu C."/>
            <person name="Appella E."/>
            <person name="Hunt D.F."/>
        </authorList>
    </citation>
    <scope>SUBCELLULAR LOCATION [LARGE SCALE ANALYSIS]</scope>
    <source>
        <tissue>Melanoma</tissue>
    </source>
</reference>
<reference key="19">
    <citation type="journal article" date="2009" name="J. Proteome Res.">
        <title>Glycoproteomics analysis of human liver tissue by combination of multiple enzyme digestion and hydrazide chemistry.</title>
        <authorList>
            <person name="Chen R."/>
            <person name="Jiang X."/>
            <person name="Sun D."/>
            <person name="Han G."/>
            <person name="Wang F."/>
            <person name="Ye M."/>
            <person name="Wang L."/>
            <person name="Zou H."/>
        </authorList>
    </citation>
    <scope>GLYCOSYLATION [LARGE SCALE ANALYSIS] AT ASN-285</scope>
    <source>
        <tissue>Liver</tissue>
    </source>
</reference>
<reference key="20">
    <citation type="journal article" date="2009" name="Mol. Cell. Proteomics">
        <title>A strategy for precise and large scale identification of core fucosylated glycoproteins.</title>
        <authorList>
            <person name="Jia W."/>
            <person name="Lu Z."/>
            <person name="Fu Y."/>
            <person name="Wang H.P."/>
            <person name="Wang L.H."/>
            <person name="Chi H."/>
            <person name="Yuan Z.F."/>
            <person name="Zheng Z.B."/>
            <person name="Song L.N."/>
            <person name="Han H.H."/>
            <person name="Liang Y.M."/>
            <person name="Wang J.L."/>
            <person name="Cai Y."/>
            <person name="Zhang Y.K."/>
            <person name="Deng Y.L."/>
            <person name="Ying W.T."/>
            <person name="He S.M."/>
            <person name="Qian X.H."/>
        </authorList>
    </citation>
    <scope>GLYCOSYLATION AT ASN-285</scope>
</reference>
<reference key="21">
    <citation type="journal article" date="2009" name="Nat. Methods">
        <title>Enrichment of glycopeptides for glycan structure and attachment site identification.</title>
        <authorList>
            <person name="Nilsson J."/>
            <person name="Rueetschi U."/>
            <person name="Halim A."/>
            <person name="Hesse C."/>
            <person name="Carlsohn E."/>
            <person name="Brinkmalm G."/>
            <person name="Larson G."/>
        </authorList>
    </citation>
    <scope>GLYCOSYLATION [LARGE SCALE ANALYSIS]</scope>
    <scope>STRUCTURE OF CARBOHYDRATES</scope>
    <source>
        <tissue>Cerebrospinal fluid</tissue>
    </source>
</reference>
<reference key="22">
    <citation type="journal article" date="2011" name="Am. J. Hum. Genet.">
        <title>Exome sequencing identifies truncating mutations in human SERPINF1 in autosomal-recessive osteogenesis imperfecta.</title>
        <authorList>
            <person name="Becker J."/>
            <person name="Semler O."/>
            <person name="Gilissen C."/>
            <person name="Li Y."/>
            <person name="Bolz H.J."/>
            <person name="Giunta C."/>
            <person name="Bergmann C."/>
            <person name="Rohrbach M."/>
            <person name="Koerber F."/>
            <person name="Zimmermann K."/>
            <person name="de Vries P."/>
            <person name="Wirth B."/>
            <person name="Schoenau E."/>
            <person name="Wollnik B."/>
            <person name="Veltman J.A."/>
            <person name="Hoischen A."/>
            <person name="Netzer C."/>
        </authorList>
    </citation>
    <scope>INVOLVEMENT IN OI6</scope>
</reference>
<reference key="23">
    <citation type="journal article" date="2011" name="BMC Syst. Biol.">
        <title>Initial characterization of the human central proteome.</title>
        <authorList>
            <person name="Burkard T.R."/>
            <person name="Planyavsky M."/>
            <person name="Kaupe I."/>
            <person name="Breitwieser F.P."/>
            <person name="Buerckstuemmer T."/>
            <person name="Bennett K.L."/>
            <person name="Superti-Furga G."/>
            <person name="Colinge J."/>
        </authorList>
    </citation>
    <scope>IDENTIFICATION BY MASS SPECTROMETRY [LARGE SCALE ANALYSIS]</scope>
</reference>
<reference key="24">
    <citation type="journal article" date="2012" name="J. Proteome Res.">
        <title>Resveratrol-induced changes of the human adipocyte secretion profile.</title>
        <authorList>
            <person name="Rosenow A."/>
            <person name="Noben J.P."/>
            <person name="Jocken J."/>
            <person name="Kallendrusch S."/>
            <person name="Fischer-Posovszky P."/>
            <person name="Mariman E.C."/>
            <person name="Renes J."/>
        </authorList>
    </citation>
    <scope>IDENTIFICATION BY MASS SPECTROMETRY [LARGE SCALE ANALYSIS]</scope>
</reference>
<reference key="25">
    <citation type="journal article" date="2001" name="Proc. Natl. Acad. Sci. U.S.A.">
        <title>Crystal structure of human PEDF, a potent anti-angiogenic and neurite growth-promoting factor.</title>
        <authorList>
            <person name="Simonovic M."/>
            <person name="Gettins P.G.W."/>
            <person name="Volz K."/>
        </authorList>
    </citation>
    <scope>X-RAY CRYSTALLOGRAPHY (2.85 ANGSTROMS) OF 21-418</scope>
    <scope>GLYCOSYLATION AT ASN-285</scope>
</reference>
<reference key="26">
    <citation type="journal article" date="1999" name="Mol. Vis.">
        <title>Four polymorphic variations in the PEDF gene identified during the mutation screening of patients with Leber congenital amaurosis.</title>
        <authorList>
            <person name="Koenekoop R."/>
            <person name="Pina A.L."/>
            <person name="Loyer M."/>
            <person name="Davidson J."/>
            <person name="Robitaille J."/>
            <person name="Maumenee I."/>
            <person name="Tombran-Tink J."/>
        </authorList>
    </citation>
    <scope>VARIANT MET-72</scope>
</reference>
<reference key="27">
    <citation type="journal article" date="2011" name="J. Mol. Cell Biol.">
        <title>Quantitative detection of single amino acid polymorphisms by targeted proteomics.</title>
        <authorList>
            <person name="Su Z.D."/>
            <person name="Sun L."/>
            <person name="Yu D.X."/>
            <person name="Li R.X."/>
            <person name="Li H.X."/>
            <person name="Yu Z.J."/>
            <person name="Sheng Q.H."/>
            <person name="Lin X."/>
            <person name="Zeng R."/>
            <person name="Wu J.R."/>
        </authorList>
    </citation>
    <scope>VARIANT MET-72</scope>
    <scope>IDENTIFICATION BY MASS SPECTROMETRY</scope>
</reference>
<accession>P36955</accession>
<accession>F1T092</accession>
<accession>Q13236</accession>
<accession>Q2TU83</accession>
<accession>Q96CT1</accession>
<accession>Q96R01</accession>
<accession>Q9BWA4</accession>
<sequence length="418" mass="46312">MQALVLLLCIGALLGHSSCQNPASPPEEGSPDPDSTGALVEEEDPFFKVPVNKLAAAVSNFGYDLYRVRSSTSPTTNVLLSPLSVATALSALSLGAEQRTESIIHRALYYDLISSPDIHGTYKELLDTVTAPQKNLKSASRIVFEKKLRIKSSFVAPLEKSYGTRPRVLTGNPRLDLQEINNWVQAQMKGKLARSTKEIPDEISILLLGVAHFKGQWVTKFDSRKTSLEDFYLDEERTVRVPMMSDPKAVLRYGLDSDLSCKIAQLPLTGSMSIIFFLPLKVTQNLTLIEESLTSEFIHDIDRELKTVQAVLTVPKLKLSYEGEVTKSLQEMKLQSLFDSPDFSKITGKPIKLTQVEHRAGFEWNEDGAGTTPSPGLQPAHLTFPLDYHLNQPFIFVLRDTDTGALLFIGKILDPRGP</sequence>
<gene>
    <name type="primary">SERPINF1</name>
    <name type="synonym">PEDF</name>
    <name type="ORF">PIG35</name>
</gene>
<keyword id="KW-0002">3D-structure</keyword>
<keyword id="KW-0903">Direct protein sequencing</keyword>
<keyword id="KW-0242">Dwarfism</keyword>
<keyword id="KW-0325">Glycoprotein</keyword>
<keyword id="KW-1065">Osteogenesis imperfecta</keyword>
<keyword id="KW-0597">Phosphoprotein</keyword>
<keyword id="KW-1267">Proteomics identification</keyword>
<keyword id="KW-0873">Pyrrolidone carboxylic acid</keyword>
<keyword id="KW-1185">Reference proteome</keyword>
<keyword id="KW-0964">Secreted</keyword>
<keyword id="KW-0732">Signal</keyword>
<organism>
    <name type="scientific">Homo sapiens</name>
    <name type="common">Human</name>
    <dbReference type="NCBI Taxonomy" id="9606"/>
    <lineage>
        <taxon>Eukaryota</taxon>
        <taxon>Metazoa</taxon>
        <taxon>Chordata</taxon>
        <taxon>Craniata</taxon>
        <taxon>Vertebrata</taxon>
        <taxon>Euteleostomi</taxon>
        <taxon>Mammalia</taxon>
        <taxon>Eutheria</taxon>
        <taxon>Euarchontoglires</taxon>
        <taxon>Primates</taxon>
        <taxon>Haplorrhini</taxon>
        <taxon>Catarrhini</taxon>
        <taxon>Hominidae</taxon>
        <taxon>Homo</taxon>
    </lineage>
</organism>
<evidence type="ECO:0000256" key="1">
    <source>
        <dbReference type="SAM" id="MobiDB-lite"/>
    </source>
</evidence>
<evidence type="ECO:0000269" key="2">
    <source>
    </source>
</evidence>
<evidence type="ECO:0000269" key="3">
    <source>
    </source>
</evidence>
<evidence type="ECO:0000269" key="4">
    <source>
    </source>
</evidence>
<evidence type="ECO:0000269" key="5">
    <source>
    </source>
</evidence>
<evidence type="ECO:0000269" key="6">
    <source>
    </source>
</evidence>
<evidence type="ECO:0000269" key="7">
    <source>
    </source>
</evidence>
<evidence type="ECO:0000269" key="8">
    <source>
    </source>
</evidence>
<evidence type="ECO:0000269" key="9">
    <source>
    </source>
</evidence>
<evidence type="ECO:0000269" key="10">
    <source>
    </source>
</evidence>
<evidence type="ECO:0000269" key="11">
    <source>
    </source>
</evidence>
<evidence type="ECO:0000269" key="12">
    <source>
    </source>
</evidence>
<evidence type="ECO:0000269" key="13">
    <source>
    </source>
</evidence>
<evidence type="ECO:0000269" key="14">
    <source>
    </source>
</evidence>
<evidence type="ECO:0000269" key="15">
    <source>
    </source>
</evidence>
<evidence type="ECO:0000269" key="16">
    <source>
    </source>
</evidence>
<evidence type="ECO:0000269" key="17">
    <source>
    </source>
</evidence>
<evidence type="ECO:0000269" key="18">
    <source>
    </source>
</evidence>
<evidence type="ECO:0000269" key="19">
    <source>
    </source>
</evidence>
<evidence type="ECO:0000269" key="20">
    <source ref="10"/>
</evidence>
<evidence type="ECO:0000269" key="21">
    <source ref="3"/>
</evidence>
<evidence type="ECO:0000269" key="22">
    <source ref="5"/>
</evidence>
<evidence type="ECO:0000269" key="23">
    <source ref="8"/>
</evidence>
<evidence type="ECO:0000305" key="24"/>
<evidence type="ECO:0007829" key="25">
    <source>
        <dbReference type="PDB" id="1IMV"/>
    </source>
</evidence>
<name>PEDF_HUMAN</name>